<proteinExistence type="inferred from homology"/>
<name>FIEF_PECAS</name>
<protein>
    <recommendedName>
        <fullName evidence="1">Cation-efflux pump FieF</fullName>
    </recommendedName>
</protein>
<organism>
    <name type="scientific">Pectobacterium atrosepticum (strain SCRI 1043 / ATCC BAA-672)</name>
    <name type="common">Erwinia carotovora subsp. atroseptica</name>
    <dbReference type="NCBI Taxonomy" id="218491"/>
    <lineage>
        <taxon>Bacteria</taxon>
        <taxon>Pseudomonadati</taxon>
        <taxon>Pseudomonadota</taxon>
        <taxon>Gammaproteobacteria</taxon>
        <taxon>Enterobacterales</taxon>
        <taxon>Pectobacteriaceae</taxon>
        <taxon>Pectobacterium</taxon>
    </lineage>
</organism>
<dbReference type="EMBL" id="BX950851">
    <property type="protein sequence ID" value="CAG77205.1"/>
    <property type="molecule type" value="Genomic_DNA"/>
</dbReference>
<dbReference type="RefSeq" id="WP_011095772.1">
    <property type="nucleotide sequence ID" value="NC_004547.2"/>
</dbReference>
<dbReference type="SMR" id="Q6CZ45"/>
<dbReference type="STRING" id="218491.ECA4308"/>
<dbReference type="GeneID" id="57210965"/>
<dbReference type="KEGG" id="eca:ECA4308"/>
<dbReference type="eggNOG" id="COG0053">
    <property type="taxonomic scope" value="Bacteria"/>
</dbReference>
<dbReference type="HOGENOM" id="CLU_013430_3_0_6"/>
<dbReference type="OrthoDB" id="9806522at2"/>
<dbReference type="Proteomes" id="UP000007966">
    <property type="component" value="Chromosome"/>
</dbReference>
<dbReference type="GO" id="GO:0005886">
    <property type="term" value="C:plasma membrane"/>
    <property type="evidence" value="ECO:0007669"/>
    <property type="project" value="UniProtKB-SubCell"/>
</dbReference>
<dbReference type="GO" id="GO:0015086">
    <property type="term" value="F:cadmium ion transmembrane transporter activity"/>
    <property type="evidence" value="ECO:0007669"/>
    <property type="project" value="UniProtKB-UniRule"/>
</dbReference>
<dbReference type="GO" id="GO:0015093">
    <property type="term" value="F:ferrous iron transmembrane transporter activity"/>
    <property type="evidence" value="ECO:0007669"/>
    <property type="project" value="TreeGrafter"/>
</dbReference>
<dbReference type="GO" id="GO:0046872">
    <property type="term" value="F:metal ion binding"/>
    <property type="evidence" value="ECO:0007669"/>
    <property type="project" value="UniProtKB-KW"/>
</dbReference>
<dbReference type="GO" id="GO:0015341">
    <property type="term" value="F:zinc efflux antiporter activity"/>
    <property type="evidence" value="ECO:0007669"/>
    <property type="project" value="TreeGrafter"/>
</dbReference>
<dbReference type="GO" id="GO:0006882">
    <property type="term" value="P:intracellular zinc ion homeostasis"/>
    <property type="evidence" value="ECO:0007669"/>
    <property type="project" value="TreeGrafter"/>
</dbReference>
<dbReference type="FunFam" id="1.20.1510.10:FF:000001">
    <property type="entry name" value="Ferrous-iron efflux pump FieF"/>
    <property type="match status" value="1"/>
</dbReference>
<dbReference type="FunFam" id="3.30.70.1350:FF:000002">
    <property type="entry name" value="Ferrous-iron efflux pump FieF"/>
    <property type="match status" value="1"/>
</dbReference>
<dbReference type="Gene3D" id="1.20.1510.10">
    <property type="entry name" value="Cation efflux protein transmembrane domain"/>
    <property type="match status" value="1"/>
</dbReference>
<dbReference type="Gene3D" id="3.30.70.1350">
    <property type="entry name" value="Cation efflux protein, cytoplasmic domain"/>
    <property type="match status" value="1"/>
</dbReference>
<dbReference type="HAMAP" id="MF_01425">
    <property type="entry name" value="Cation_efflux_FieF"/>
    <property type="match status" value="1"/>
</dbReference>
<dbReference type="InterPro" id="IPR002524">
    <property type="entry name" value="Cation_efflux"/>
</dbReference>
<dbReference type="InterPro" id="IPR027470">
    <property type="entry name" value="Cation_efflux_CTD"/>
</dbReference>
<dbReference type="InterPro" id="IPR036837">
    <property type="entry name" value="Cation_efflux_CTD_sf"/>
</dbReference>
<dbReference type="InterPro" id="IPR023783">
    <property type="entry name" value="Cation_efflux_FieF"/>
</dbReference>
<dbReference type="InterPro" id="IPR027469">
    <property type="entry name" value="Cation_efflux_TMD_sf"/>
</dbReference>
<dbReference type="InterPro" id="IPR050291">
    <property type="entry name" value="CDF_Transporter"/>
</dbReference>
<dbReference type="NCBIfam" id="TIGR01297">
    <property type="entry name" value="CDF"/>
    <property type="match status" value="1"/>
</dbReference>
<dbReference type="NCBIfam" id="NF007064">
    <property type="entry name" value="PRK09509.1"/>
    <property type="match status" value="1"/>
</dbReference>
<dbReference type="PANTHER" id="PTHR43840:SF41">
    <property type="entry name" value="CATION-EFFLUX PUMP FIEF"/>
    <property type="match status" value="1"/>
</dbReference>
<dbReference type="PANTHER" id="PTHR43840">
    <property type="entry name" value="MITOCHONDRIAL METAL TRANSPORTER 1-RELATED"/>
    <property type="match status" value="1"/>
</dbReference>
<dbReference type="Pfam" id="PF01545">
    <property type="entry name" value="Cation_efflux"/>
    <property type="match status" value="1"/>
</dbReference>
<dbReference type="Pfam" id="PF16916">
    <property type="entry name" value="ZT_dimer"/>
    <property type="match status" value="1"/>
</dbReference>
<dbReference type="SUPFAM" id="SSF160240">
    <property type="entry name" value="Cation efflux protein cytoplasmic domain-like"/>
    <property type="match status" value="1"/>
</dbReference>
<dbReference type="SUPFAM" id="SSF161111">
    <property type="entry name" value="Cation efflux protein transmembrane domain-like"/>
    <property type="match status" value="1"/>
</dbReference>
<accession>Q6CZ45</accession>
<keyword id="KW-0997">Cell inner membrane</keyword>
<keyword id="KW-1003">Cell membrane</keyword>
<keyword id="KW-0406">Ion transport</keyword>
<keyword id="KW-0408">Iron</keyword>
<keyword id="KW-0410">Iron transport</keyword>
<keyword id="KW-0472">Membrane</keyword>
<keyword id="KW-0479">Metal-binding</keyword>
<keyword id="KW-1185">Reference proteome</keyword>
<keyword id="KW-0812">Transmembrane</keyword>
<keyword id="KW-1133">Transmembrane helix</keyword>
<keyword id="KW-0813">Transport</keyword>
<keyword id="KW-0862">Zinc</keyword>
<keyword id="KW-0864">Zinc transport</keyword>
<feature type="chain" id="PRO_0000206127" description="Cation-efflux pump FieF">
    <location>
        <begin position="1"/>
        <end position="300"/>
    </location>
</feature>
<feature type="transmembrane region" description="Helical" evidence="1">
    <location>
        <begin position="11"/>
        <end position="31"/>
    </location>
</feature>
<feature type="transmembrane region" description="Helical" evidence="1">
    <location>
        <begin position="40"/>
        <end position="60"/>
    </location>
</feature>
<feature type="transmembrane region" description="Helical" evidence="1">
    <location>
        <begin position="81"/>
        <end position="101"/>
    </location>
</feature>
<feature type="transmembrane region" description="Helical" evidence="1">
    <location>
        <begin position="114"/>
        <end position="134"/>
    </location>
</feature>
<feature type="transmembrane region" description="Helical" evidence="1">
    <location>
        <begin position="156"/>
        <end position="176"/>
    </location>
</feature>
<feature type="transmembrane region" description="Helical" evidence="1">
    <location>
        <begin position="182"/>
        <end position="202"/>
    </location>
</feature>
<feature type="binding site" evidence="1">
    <location>
        <position position="45"/>
    </location>
    <ligand>
        <name>Zn(2+)</name>
        <dbReference type="ChEBI" id="CHEBI:29105"/>
    </ligand>
</feature>
<feature type="binding site" evidence="1">
    <location>
        <position position="49"/>
    </location>
    <ligand>
        <name>Zn(2+)</name>
        <dbReference type="ChEBI" id="CHEBI:29105"/>
    </ligand>
</feature>
<feature type="binding site" evidence="1">
    <location>
        <position position="153"/>
    </location>
    <ligand>
        <name>Zn(2+)</name>
        <dbReference type="ChEBI" id="CHEBI:29105"/>
    </ligand>
</feature>
<feature type="binding site" evidence="1">
    <location>
        <position position="157"/>
    </location>
    <ligand>
        <name>Zn(2+)</name>
        <dbReference type="ChEBI" id="CHEBI:29105"/>
    </ligand>
</feature>
<comment type="function">
    <text evidence="1">Divalent metal cation transporter which exports Zn(2+), Cd(2+) and possibly Fe(2+). May be involved in zinc and iron detoxification by efflux.</text>
</comment>
<comment type="catalytic activity">
    <reaction evidence="1">
        <text>Zn(2+)(in) + H(+)(out) = Zn(2+)(out) + H(+)(in)</text>
        <dbReference type="Rhea" id="RHEA:28839"/>
        <dbReference type="ChEBI" id="CHEBI:15378"/>
        <dbReference type="ChEBI" id="CHEBI:29105"/>
    </reaction>
</comment>
<comment type="catalytic activity">
    <reaction evidence="1">
        <text>Cd(2+)(in) + H(+)(out) = Cd(2+)(out) + H(+)(in)</text>
        <dbReference type="Rhea" id="RHEA:28739"/>
        <dbReference type="ChEBI" id="CHEBI:15378"/>
        <dbReference type="ChEBI" id="CHEBI:48775"/>
    </reaction>
</comment>
<comment type="catalytic activity">
    <reaction evidence="1">
        <text>Fe(2+)(in) + H(+)(out) = Fe(2+)(out) + H(+)(in)</text>
        <dbReference type="Rhea" id="RHEA:29439"/>
        <dbReference type="ChEBI" id="CHEBI:15378"/>
        <dbReference type="ChEBI" id="CHEBI:29033"/>
    </reaction>
</comment>
<comment type="subunit">
    <text evidence="1">Homodimer.</text>
</comment>
<comment type="subcellular location">
    <subcellularLocation>
        <location evidence="1">Cell inner membrane</location>
        <topology evidence="1">Multi-pass membrane protein</topology>
    </subcellularLocation>
</comment>
<comment type="similarity">
    <text evidence="1">Belongs to the cation diffusion facilitator (CDF) transporter (TC 2.A.4) family. FieF subfamily.</text>
</comment>
<evidence type="ECO:0000255" key="1">
    <source>
        <dbReference type="HAMAP-Rule" id="MF_01425"/>
    </source>
</evidence>
<gene>
    <name evidence="1" type="primary">fieF</name>
    <name type="ordered locus">ECA4308</name>
</gene>
<reference key="1">
    <citation type="journal article" date="2004" name="Proc. Natl. Acad. Sci. U.S.A.">
        <title>Genome sequence of the enterobacterial phytopathogen Erwinia carotovora subsp. atroseptica and characterization of virulence factors.</title>
        <authorList>
            <person name="Bell K.S."/>
            <person name="Sebaihia M."/>
            <person name="Pritchard L."/>
            <person name="Holden M.T.G."/>
            <person name="Hyman L.J."/>
            <person name="Holeva M.C."/>
            <person name="Thomson N.R."/>
            <person name="Bentley S.D."/>
            <person name="Churcher L.J.C."/>
            <person name="Mungall K."/>
            <person name="Atkin R."/>
            <person name="Bason N."/>
            <person name="Brooks K."/>
            <person name="Chillingworth T."/>
            <person name="Clark K."/>
            <person name="Doggett J."/>
            <person name="Fraser A."/>
            <person name="Hance Z."/>
            <person name="Hauser H."/>
            <person name="Jagels K."/>
            <person name="Moule S."/>
            <person name="Norbertczak H."/>
            <person name="Ormond D."/>
            <person name="Price C."/>
            <person name="Quail M.A."/>
            <person name="Sanders M."/>
            <person name="Walker D."/>
            <person name="Whitehead S."/>
            <person name="Salmond G.P.C."/>
            <person name="Birch P.R.J."/>
            <person name="Parkhill J."/>
            <person name="Toth I.K."/>
        </authorList>
    </citation>
    <scope>NUCLEOTIDE SEQUENCE [LARGE SCALE GENOMIC DNA]</scope>
    <source>
        <strain>SCRI 1043 / ATCC BAA-672</strain>
    </source>
</reference>
<sequence length="300" mass="32762">MNPHYARLVTLAAVSATAVALVLFVMKVFAWWHTGSVSLLASLVDSLVDIAASLVNLLVVRYSLQPADTEHAFGHGKAESLAALAQSMFISGSALFLILTGLQHSLEPQTLHAPEVGMWVTLIALVATLLLVSFQRWVVKHTHSQAVRADMLHYQSDLLMNGAILVALALSWKGITRADSLFALGIGVYILYSALRMGYDAVQSLLDRALPDEEHRAIAEVIVNWPGIRGAHALRTRRSGPTRFIQLHLEMDDALPLAEAHQIADDLEQALRKQFPGADIIIHQDPVSAVPENQRGRLTA</sequence>